<accession>O54838</accession>
<keyword id="KW-0378">Hydrolase</keyword>
<keyword id="KW-0539">Nucleus</keyword>
<keyword id="KW-0904">Protein phosphatase</keyword>
<keyword id="KW-1185">Reference proteome</keyword>
<gene>
    <name type="primary">Dusp5</name>
</gene>
<organism>
    <name type="scientific">Rattus norvegicus</name>
    <name type="common">Rat</name>
    <dbReference type="NCBI Taxonomy" id="10116"/>
    <lineage>
        <taxon>Eukaryota</taxon>
        <taxon>Metazoa</taxon>
        <taxon>Chordata</taxon>
        <taxon>Craniata</taxon>
        <taxon>Vertebrata</taxon>
        <taxon>Euteleostomi</taxon>
        <taxon>Mammalia</taxon>
        <taxon>Eutheria</taxon>
        <taxon>Euarchontoglires</taxon>
        <taxon>Glires</taxon>
        <taxon>Rodentia</taxon>
        <taxon>Myomorpha</taxon>
        <taxon>Muroidea</taxon>
        <taxon>Muridae</taxon>
        <taxon>Murinae</taxon>
        <taxon>Rattus</taxon>
    </lineage>
</organism>
<name>DUS5_RAT</name>
<proteinExistence type="evidence at transcript level"/>
<feature type="chain" id="PRO_0000094803" description="Dual specificity protein phosphatase 5">
    <location>
        <begin position="1"/>
        <end position="384"/>
    </location>
</feature>
<feature type="domain" description="Rhodanese" evidence="5">
    <location>
        <begin position="19"/>
        <end position="141"/>
    </location>
</feature>
<feature type="domain" description="Tyrosine-protein phosphatase" evidence="4">
    <location>
        <begin position="178"/>
        <end position="319"/>
    </location>
</feature>
<feature type="short sequence motif" description="Nuclear localization signal" evidence="3">
    <location>
        <begin position="53"/>
        <end position="74"/>
    </location>
</feature>
<feature type="active site" description="Phosphocysteine intermediate" evidence="4">
    <location>
        <position position="263"/>
    </location>
</feature>
<reference key="1">
    <citation type="journal article" date="1998" name="J. Mol. Neurosci.">
        <title>Hippocampal plasticity involves extensive gene induction and multiple cellular mechanisms.</title>
        <authorList>
            <person name="Hevroni D."/>
            <person name="Rattner A."/>
            <person name="Bundman M."/>
            <person name="Lederfein D."/>
            <person name="Gabarah A."/>
            <person name="Mangelus M."/>
            <person name="Silverman M.A."/>
            <person name="Kedar H."/>
            <person name="Naor C."/>
            <person name="Kornuc M."/>
            <person name="Hanoch T."/>
            <person name="Seger R."/>
            <person name="Theill L.E."/>
            <person name="Nedivi E."/>
            <person name="Richter-Levin G."/>
            <person name="Citri Y."/>
        </authorList>
    </citation>
    <scope>NUCLEOTIDE SEQUENCE [MRNA]</scope>
    <source>
        <strain>Wistar</strain>
    </source>
</reference>
<evidence type="ECO:0000250" key="1"/>
<evidence type="ECO:0000250" key="2">
    <source>
        <dbReference type="UniProtKB" id="Q16690"/>
    </source>
</evidence>
<evidence type="ECO:0000255" key="3"/>
<evidence type="ECO:0000255" key="4">
    <source>
        <dbReference type="PROSITE-ProRule" id="PRU00160"/>
    </source>
</evidence>
<evidence type="ECO:0000255" key="5">
    <source>
        <dbReference type="PROSITE-ProRule" id="PRU00173"/>
    </source>
</evidence>
<evidence type="ECO:0000255" key="6">
    <source>
        <dbReference type="PROSITE-ProRule" id="PRU10044"/>
    </source>
</evidence>
<evidence type="ECO:0000305" key="7"/>
<protein>
    <recommendedName>
        <fullName>Dual specificity protein phosphatase 5</fullName>
        <ecNumber evidence="2">3.1.3.16</ecNumber>
        <ecNumber evidence="2">3.1.3.48</ecNumber>
    </recommendedName>
    <alternativeName>
        <fullName>MAP-kinase phosphatase CPG21</fullName>
    </alternativeName>
</protein>
<dbReference type="EC" id="3.1.3.16" evidence="2"/>
<dbReference type="EC" id="3.1.3.48" evidence="2"/>
<dbReference type="EMBL" id="AF013144">
    <property type="protein sequence ID" value="AAB94858.1"/>
    <property type="molecule type" value="mRNA"/>
</dbReference>
<dbReference type="RefSeq" id="NP_598262.1">
    <property type="nucleotide sequence ID" value="NM_133578.1"/>
</dbReference>
<dbReference type="SMR" id="O54838"/>
<dbReference type="FunCoup" id="O54838">
    <property type="interactions" value="332"/>
</dbReference>
<dbReference type="STRING" id="10116.ENSRNOP00000018889"/>
<dbReference type="GlyGen" id="O54838">
    <property type="glycosylation" value="1 site"/>
</dbReference>
<dbReference type="PhosphoSitePlus" id="O54838"/>
<dbReference type="PaxDb" id="10116-ENSRNOP00000018889"/>
<dbReference type="GeneID" id="171109"/>
<dbReference type="KEGG" id="rno:171109"/>
<dbReference type="AGR" id="RGD:620854"/>
<dbReference type="CTD" id="1847"/>
<dbReference type="RGD" id="620854">
    <property type="gene designation" value="Dusp5"/>
</dbReference>
<dbReference type="eggNOG" id="KOG1716">
    <property type="taxonomic scope" value="Eukaryota"/>
</dbReference>
<dbReference type="InParanoid" id="O54838"/>
<dbReference type="PhylomeDB" id="O54838"/>
<dbReference type="Reactome" id="R-RNO-112409">
    <property type="pathway name" value="RAF-independent MAPK1/3 activation"/>
</dbReference>
<dbReference type="Reactome" id="R-RNO-5675221">
    <property type="pathway name" value="Negative regulation of MAPK pathway"/>
</dbReference>
<dbReference type="PRO" id="PR:O54838"/>
<dbReference type="Proteomes" id="UP000002494">
    <property type="component" value="Unplaced"/>
</dbReference>
<dbReference type="GO" id="GO:0005737">
    <property type="term" value="C:cytoplasm"/>
    <property type="evidence" value="ECO:0000318"/>
    <property type="project" value="GO_Central"/>
</dbReference>
<dbReference type="GO" id="GO:0005634">
    <property type="term" value="C:nucleus"/>
    <property type="evidence" value="ECO:0000318"/>
    <property type="project" value="GO_Central"/>
</dbReference>
<dbReference type="GO" id="GO:0017017">
    <property type="term" value="F:MAP kinase tyrosine/serine/threonine phosphatase activity"/>
    <property type="evidence" value="ECO:0000314"/>
    <property type="project" value="RGD"/>
</dbReference>
<dbReference type="GO" id="GO:0016791">
    <property type="term" value="F:phosphatase activity"/>
    <property type="evidence" value="ECO:0000266"/>
    <property type="project" value="RGD"/>
</dbReference>
<dbReference type="GO" id="GO:0004721">
    <property type="term" value="F:phosphoprotein phosphatase activity"/>
    <property type="evidence" value="ECO:0000318"/>
    <property type="project" value="GO_Central"/>
</dbReference>
<dbReference type="GO" id="GO:0004722">
    <property type="term" value="F:protein serine/threonine phosphatase activity"/>
    <property type="evidence" value="ECO:0007669"/>
    <property type="project" value="UniProtKB-EC"/>
</dbReference>
<dbReference type="GO" id="GO:0004725">
    <property type="term" value="F:protein tyrosine phosphatase activity"/>
    <property type="evidence" value="ECO:0007669"/>
    <property type="project" value="UniProtKB-EC"/>
</dbReference>
<dbReference type="GO" id="GO:0008138">
    <property type="term" value="F:protein tyrosine/serine/threonine phosphatase activity"/>
    <property type="evidence" value="ECO:0000266"/>
    <property type="project" value="RGD"/>
</dbReference>
<dbReference type="GO" id="GO:0001706">
    <property type="term" value="P:endoderm formation"/>
    <property type="evidence" value="ECO:0000318"/>
    <property type="project" value="GO_Central"/>
</dbReference>
<dbReference type="GO" id="GO:0045892">
    <property type="term" value="P:negative regulation of DNA-templated transcription"/>
    <property type="evidence" value="ECO:0000314"/>
    <property type="project" value="RGD"/>
</dbReference>
<dbReference type="GO" id="GO:0043409">
    <property type="term" value="P:negative regulation of MAPK cascade"/>
    <property type="evidence" value="ECO:0000318"/>
    <property type="project" value="GO_Central"/>
</dbReference>
<dbReference type="GO" id="GO:0045906">
    <property type="term" value="P:negative regulation of vasoconstriction"/>
    <property type="evidence" value="ECO:0000315"/>
    <property type="project" value="RGD"/>
</dbReference>
<dbReference type="GO" id="GO:0035970">
    <property type="term" value="P:peptidyl-threonine dephosphorylation"/>
    <property type="evidence" value="ECO:0000250"/>
    <property type="project" value="UniProtKB"/>
</dbReference>
<dbReference type="GO" id="GO:0035335">
    <property type="term" value="P:peptidyl-tyrosine dephosphorylation"/>
    <property type="evidence" value="ECO:0000250"/>
    <property type="project" value="UniProtKB"/>
</dbReference>
<dbReference type="GO" id="GO:0120277">
    <property type="term" value="P:positive regulation of cerebral blood circulation"/>
    <property type="evidence" value="ECO:0000315"/>
    <property type="project" value="RGD"/>
</dbReference>
<dbReference type="GO" id="GO:0007165">
    <property type="term" value="P:signal transduction"/>
    <property type="evidence" value="ECO:0000318"/>
    <property type="project" value="GO_Central"/>
</dbReference>
<dbReference type="CDD" id="cd14639">
    <property type="entry name" value="DSP_DUSP5"/>
    <property type="match status" value="1"/>
</dbReference>
<dbReference type="CDD" id="cd01446">
    <property type="entry name" value="DSP_MapKP"/>
    <property type="match status" value="1"/>
</dbReference>
<dbReference type="FunFam" id="3.90.190.10:FF:000057">
    <property type="entry name" value="Dual specificity phosphatase 5"/>
    <property type="match status" value="1"/>
</dbReference>
<dbReference type="FunFam" id="3.40.250.10:FF:000023">
    <property type="entry name" value="Dual specificity protein phosphatase"/>
    <property type="match status" value="1"/>
</dbReference>
<dbReference type="Gene3D" id="3.90.190.10">
    <property type="entry name" value="Protein tyrosine phosphatase superfamily"/>
    <property type="match status" value="1"/>
</dbReference>
<dbReference type="Gene3D" id="3.40.250.10">
    <property type="entry name" value="Rhodanese-like domain"/>
    <property type="match status" value="1"/>
</dbReference>
<dbReference type="InterPro" id="IPR000340">
    <property type="entry name" value="Dual-sp_phosphatase_cat-dom"/>
</dbReference>
<dbReference type="InterPro" id="IPR008343">
    <property type="entry name" value="MKP"/>
</dbReference>
<dbReference type="InterPro" id="IPR029021">
    <property type="entry name" value="Prot-tyrosine_phosphatase-like"/>
</dbReference>
<dbReference type="InterPro" id="IPR001763">
    <property type="entry name" value="Rhodanese-like_dom"/>
</dbReference>
<dbReference type="InterPro" id="IPR036873">
    <property type="entry name" value="Rhodanese-like_dom_sf"/>
</dbReference>
<dbReference type="InterPro" id="IPR016130">
    <property type="entry name" value="Tyr_Pase_AS"/>
</dbReference>
<dbReference type="InterPro" id="IPR003595">
    <property type="entry name" value="Tyr_Pase_cat"/>
</dbReference>
<dbReference type="InterPro" id="IPR000387">
    <property type="entry name" value="Tyr_Pase_dom"/>
</dbReference>
<dbReference type="InterPro" id="IPR020422">
    <property type="entry name" value="TYR_PHOSPHATASE_DUAL_dom"/>
</dbReference>
<dbReference type="PANTHER" id="PTHR10159">
    <property type="entry name" value="DUAL SPECIFICITY PROTEIN PHOSPHATASE"/>
    <property type="match status" value="1"/>
</dbReference>
<dbReference type="PANTHER" id="PTHR10159:SF40">
    <property type="entry name" value="DUAL SPECIFICITY PROTEIN PHOSPHATASE 5"/>
    <property type="match status" value="1"/>
</dbReference>
<dbReference type="Pfam" id="PF00782">
    <property type="entry name" value="DSPc"/>
    <property type="match status" value="1"/>
</dbReference>
<dbReference type="Pfam" id="PF00581">
    <property type="entry name" value="Rhodanese"/>
    <property type="match status" value="1"/>
</dbReference>
<dbReference type="PIRSF" id="PIRSF000939">
    <property type="entry name" value="MAPK_Ptase"/>
    <property type="match status" value="1"/>
</dbReference>
<dbReference type="PRINTS" id="PR01764">
    <property type="entry name" value="MAPKPHPHTASE"/>
</dbReference>
<dbReference type="SMART" id="SM00195">
    <property type="entry name" value="DSPc"/>
    <property type="match status" value="1"/>
</dbReference>
<dbReference type="SMART" id="SM00404">
    <property type="entry name" value="PTPc_motif"/>
    <property type="match status" value="1"/>
</dbReference>
<dbReference type="SMART" id="SM00450">
    <property type="entry name" value="RHOD"/>
    <property type="match status" value="1"/>
</dbReference>
<dbReference type="SUPFAM" id="SSF52799">
    <property type="entry name" value="(Phosphotyrosine protein) phosphatases II"/>
    <property type="match status" value="1"/>
</dbReference>
<dbReference type="SUPFAM" id="SSF52821">
    <property type="entry name" value="Rhodanese/Cell cycle control phosphatase"/>
    <property type="match status" value="1"/>
</dbReference>
<dbReference type="PROSITE" id="PS50206">
    <property type="entry name" value="RHODANESE_3"/>
    <property type="match status" value="1"/>
</dbReference>
<dbReference type="PROSITE" id="PS00383">
    <property type="entry name" value="TYR_PHOSPHATASE_1"/>
    <property type="match status" value="1"/>
</dbReference>
<dbReference type="PROSITE" id="PS50056">
    <property type="entry name" value="TYR_PHOSPHATASE_2"/>
    <property type="match status" value="1"/>
</dbReference>
<dbReference type="PROSITE" id="PS50054">
    <property type="entry name" value="TYR_PHOSPHATASE_DUAL"/>
    <property type="match status" value="1"/>
</dbReference>
<comment type="function">
    <text evidence="2">Dual specificity protein phosphatase; active with phosphotyrosine, phosphoserine and phosphothreonine residues. The highest relative activity is toward ERK1.</text>
</comment>
<comment type="catalytic activity">
    <reaction evidence="2 6">
        <text>O-phospho-L-tyrosyl-[protein] + H2O = L-tyrosyl-[protein] + phosphate</text>
        <dbReference type="Rhea" id="RHEA:10684"/>
        <dbReference type="Rhea" id="RHEA-COMP:10136"/>
        <dbReference type="Rhea" id="RHEA-COMP:20101"/>
        <dbReference type="ChEBI" id="CHEBI:15377"/>
        <dbReference type="ChEBI" id="CHEBI:43474"/>
        <dbReference type="ChEBI" id="CHEBI:46858"/>
        <dbReference type="ChEBI" id="CHEBI:61978"/>
        <dbReference type="EC" id="3.1.3.48"/>
    </reaction>
</comment>
<comment type="catalytic activity">
    <reaction evidence="2">
        <text>O-phospho-L-seryl-[protein] + H2O = L-seryl-[protein] + phosphate</text>
        <dbReference type="Rhea" id="RHEA:20629"/>
        <dbReference type="Rhea" id="RHEA-COMP:9863"/>
        <dbReference type="Rhea" id="RHEA-COMP:11604"/>
        <dbReference type="ChEBI" id="CHEBI:15377"/>
        <dbReference type="ChEBI" id="CHEBI:29999"/>
        <dbReference type="ChEBI" id="CHEBI:43474"/>
        <dbReference type="ChEBI" id="CHEBI:83421"/>
        <dbReference type="EC" id="3.1.3.16"/>
    </reaction>
</comment>
<comment type="catalytic activity">
    <reaction evidence="2">
        <text>O-phospho-L-threonyl-[protein] + H2O = L-threonyl-[protein] + phosphate</text>
        <dbReference type="Rhea" id="RHEA:47004"/>
        <dbReference type="Rhea" id="RHEA-COMP:11060"/>
        <dbReference type="Rhea" id="RHEA-COMP:11605"/>
        <dbReference type="ChEBI" id="CHEBI:15377"/>
        <dbReference type="ChEBI" id="CHEBI:30013"/>
        <dbReference type="ChEBI" id="CHEBI:43474"/>
        <dbReference type="ChEBI" id="CHEBI:61977"/>
        <dbReference type="EC" id="3.1.3.16"/>
    </reaction>
</comment>
<comment type="subcellular location">
    <subcellularLocation>
        <location evidence="1">Nucleus</location>
    </subcellularLocation>
</comment>
<comment type="similarity">
    <text evidence="7">Belongs to the protein-tyrosine phosphatase family. Non-receptor class dual specificity subfamily.</text>
</comment>
<sequence length="384" mass="42094">MKVTSLDGRRLRKMLRKEAEARCVVLDCRPYLAFAASSVRGSLNVNLNSVVLRRARGGAVSARYVLADEAARARLLQEGGGGVAAVVVLDQGSRHWQKLREESAARVVLTSLLACLSAGPRVYFLKGGYETFYSQYPECCVDAKPISQEKLEGERGLLSQCGKPILSVAYRPAYDQGGPVEILPFLYLGSAYHASKCEFLANLHITALLNVSRRTSEACTTHLHYKWIPVEDSHTADISSHFQEAIDFIDCVREEGGKVLVHCEAGVSRSPTICMAYLMKTKQFRLKEAFEYIKQRRSVVSPNFGFMGQLLQYESEILPSTPTPQPPSCQGEAASSTFIGHLQTLSPDMQGAYCTFPTSVLAPVPTHATVAELHRSPVATATSC</sequence>